<reference key="1">
    <citation type="journal article" date="2004" name="Science">
        <title>The genomic sequence of the accidental pathogen Legionella pneumophila.</title>
        <authorList>
            <person name="Chien M."/>
            <person name="Morozova I."/>
            <person name="Shi S."/>
            <person name="Sheng H."/>
            <person name="Chen J."/>
            <person name="Gomez S.M."/>
            <person name="Asamani G."/>
            <person name="Hill K."/>
            <person name="Nuara J."/>
            <person name="Feder M."/>
            <person name="Rineer J."/>
            <person name="Greenberg J.J."/>
            <person name="Steshenko V."/>
            <person name="Park S.H."/>
            <person name="Zhao B."/>
            <person name="Teplitskaya E."/>
            <person name="Edwards J.R."/>
            <person name="Pampou S."/>
            <person name="Georghiou A."/>
            <person name="Chou I.-C."/>
            <person name="Iannuccilli W."/>
            <person name="Ulz M.E."/>
            <person name="Kim D.H."/>
            <person name="Geringer-Sameth A."/>
            <person name="Goldsberry C."/>
            <person name="Morozov P."/>
            <person name="Fischer S.G."/>
            <person name="Segal G."/>
            <person name="Qu X."/>
            <person name="Rzhetsky A."/>
            <person name="Zhang P."/>
            <person name="Cayanis E."/>
            <person name="De Jong P.J."/>
            <person name="Ju J."/>
            <person name="Kalachikov S."/>
            <person name="Shuman H.A."/>
            <person name="Russo J.J."/>
        </authorList>
    </citation>
    <scope>NUCLEOTIDE SEQUENCE [LARGE SCALE GENOMIC DNA]</scope>
    <source>
        <strain>Philadelphia 1 / ATCC 33152 / DSM 7513</strain>
    </source>
</reference>
<protein>
    <recommendedName>
        <fullName evidence="1">4-hydroxybenzoate octaprenyltransferase</fullName>
        <ecNumber evidence="1">2.5.1.39</ecNumber>
    </recommendedName>
    <alternativeName>
        <fullName evidence="1">4-HB polyprenyltransferase</fullName>
    </alternativeName>
</protein>
<accession>Q5ZVL0</accession>
<organism>
    <name type="scientific">Legionella pneumophila subsp. pneumophila (strain Philadelphia 1 / ATCC 33152 / DSM 7513)</name>
    <dbReference type="NCBI Taxonomy" id="272624"/>
    <lineage>
        <taxon>Bacteria</taxon>
        <taxon>Pseudomonadati</taxon>
        <taxon>Pseudomonadota</taxon>
        <taxon>Gammaproteobacteria</taxon>
        <taxon>Legionellales</taxon>
        <taxon>Legionellaceae</taxon>
        <taxon>Legionella</taxon>
    </lineage>
</organism>
<proteinExistence type="inferred from homology"/>
<dbReference type="EC" id="2.5.1.39" evidence="1"/>
<dbReference type="EMBL" id="AE017354">
    <property type="protein sequence ID" value="AAU27512.1"/>
    <property type="molecule type" value="Genomic_DNA"/>
</dbReference>
<dbReference type="RefSeq" id="WP_010947159.1">
    <property type="nucleotide sequence ID" value="NC_002942.5"/>
</dbReference>
<dbReference type="RefSeq" id="YP_095459.1">
    <property type="nucleotide sequence ID" value="NC_002942.5"/>
</dbReference>
<dbReference type="SMR" id="Q5ZVL0"/>
<dbReference type="STRING" id="272624.lpg1430"/>
<dbReference type="PaxDb" id="272624-lpg1430"/>
<dbReference type="GeneID" id="57035420"/>
<dbReference type="KEGG" id="lpn:lpg1430"/>
<dbReference type="PATRIC" id="fig|272624.6.peg.1500"/>
<dbReference type="eggNOG" id="COG0382">
    <property type="taxonomic scope" value="Bacteria"/>
</dbReference>
<dbReference type="HOGENOM" id="CLU_034879_1_0_6"/>
<dbReference type="OrthoDB" id="9782418at2"/>
<dbReference type="UniPathway" id="UPA00232"/>
<dbReference type="Proteomes" id="UP000000609">
    <property type="component" value="Chromosome"/>
</dbReference>
<dbReference type="GO" id="GO:0005886">
    <property type="term" value="C:plasma membrane"/>
    <property type="evidence" value="ECO:0007669"/>
    <property type="project" value="UniProtKB-SubCell"/>
</dbReference>
<dbReference type="GO" id="GO:0008412">
    <property type="term" value="F:4-hydroxybenzoate polyprenyltransferase activity"/>
    <property type="evidence" value="ECO:0007669"/>
    <property type="project" value="UniProtKB-UniRule"/>
</dbReference>
<dbReference type="GO" id="GO:0006744">
    <property type="term" value="P:ubiquinone biosynthetic process"/>
    <property type="evidence" value="ECO:0007669"/>
    <property type="project" value="UniProtKB-UniRule"/>
</dbReference>
<dbReference type="CDD" id="cd13959">
    <property type="entry name" value="PT_UbiA_COQ2"/>
    <property type="match status" value="1"/>
</dbReference>
<dbReference type="FunFam" id="1.10.357.140:FF:000008">
    <property type="entry name" value="4-hydroxybenzoate octaprenyltransferase"/>
    <property type="match status" value="1"/>
</dbReference>
<dbReference type="FunFam" id="1.20.120.1780:FF:000001">
    <property type="entry name" value="4-hydroxybenzoate octaprenyltransferase"/>
    <property type="match status" value="1"/>
</dbReference>
<dbReference type="Gene3D" id="1.10.357.140">
    <property type="entry name" value="UbiA prenyltransferase"/>
    <property type="match status" value="1"/>
</dbReference>
<dbReference type="Gene3D" id="1.20.120.1780">
    <property type="entry name" value="UbiA prenyltransferase"/>
    <property type="match status" value="1"/>
</dbReference>
<dbReference type="HAMAP" id="MF_01635">
    <property type="entry name" value="UbiA"/>
    <property type="match status" value="1"/>
</dbReference>
<dbReference type="InterPro" id="IPR006370">
    <property type="entry name" value="HB_polyprenyltransferase-like"/>
</dbReference>
<dbReference type="InterPro" id="IPR039653">
    <property type="entry name" value="Prenyltransferase"/>
</dbReference>
<dbReference type="InterPro" id="IPR000537">
    <property type="entry name" value="UbiA_prenyltransferase"/>
</dbReference>
<dbReference type="InterPro" id="IPR030470">
    <property type="entry name" value="UbiA_prenylTrfase_CS"/>
</dbReference>
<dbReference type="InterPro" id="IPR044878">
    <property type="entry name" value="UbiA_sf"/>
</dbReference>
<dbReference type="NCBIfam" id="TIGR01474">
    <property type="entry name" value="ubiA_proteo"/>
    <property type="match status" value="1"/>
</dbReference>
<dbReference type="PANTHER" id="PTHR11048:SF28">
    <property type="entry name" value="4-HYDROXYBENZOATE POLYPRENYLTRANSFERASE, MITOCHONDRIAL"/>
    <property type="match status" value="1"/>
</dbReference>
<dbReference type="PANTHER" id="PTHR11048">
    <property type="entry name" value="PRENYLTRANSFERASES"/>
    <property type="match status" value="1"/>
</dbReference>
<dbReference type="Pfam" id="PF01040">
    <property type="entry name" value="UbiA"/>
    <property type="match status" value="1"/>
</dbReference>
<dbReference type="PROSITE" id="PS00943">
    <property type="entry name" value="UBIA"/>
    <property type="match status" value="1"/>
</dbReference>
<sequence length="282" mass="32222">MIPWNAYVRLLRLNKPIGILLLWYPTAWALWMANQGFPSIDLLMIFLLGTVFMRSAGCVINDIADRHIDRHVARTQFRPLTAGEVSLSEAFILLFILLCASLLLLLKLPINCFYFAVISVLITFLYPFCKRFLNAPQLILGLAFSMGIPMAFIASGKNLNSDFIVLFLINFSWIIAYDTMYAMTDKADDLKIGVKSTAIYFASYDRLIIALLLIFLHSLWLVWAINKNAEWFFYLLWCTAAGILTYQLKLIYARIPKNCFKAFLVSGYYGLVMWFAVGLALI</sequence>
<feature type="chain" id="PRO_0000262805" description="4-hydroxybenzoate octaprenyltransferase">
    <location>
        <begin position="1"/>
        <end position="282"/>
    </location>
</feature>
<feature type="transmembrane region" description="Helical" evidence="1">
    <location>
        <begin position="17"/>
        <end position="37"/>
    </location>
</feature>
<feature type="transmembrane region" description="Helical" evidence="1">
    <location>
        <begin position="40"/>
        <end position="60"/>
    </location>
</feature>
<feature type="transmembrane region" description="Helical" evidence="1">
    <location>
        <begin position="90"/>
        <end position="110"/>
    </location>
</feature>
<feature type="transmembrane region" description="Helical" evidence="1">
    <location>
        <begin position="113"/>
        <end position="133"/>
    </location>
</feature>
<feature type="transmembrane region" description="Helical" evidence="1">
    <location>
        <begin position="135"/>
        <end position="155"/>
    </location>
</feature>
<feature type="transmembrane region" description="Helical" evidence="1">
    <location>
        <begin position="163"/>
        <end position="183"/>
    </location>
</feature>
<feature type="transmembrane region" description="Helical" evidence="1">
    <location>
        <begin position="207"/>
        <end position="227"/>
    </location>
</feature>
<feature type="transmembrane region" description="Helical" evidence="1">
    <location>
        <begin position="231"/>
        <end position="251"/>
    </location>
</feature>
<feature type="transmembrane region" description="Helical" evidence="1">
    <location>
        <begin position="262"/>
        <end position="282"/>
    </location>
</feature>
<gene>
    <name evidence="1" type="primary">ubiA</name>
    <name type="ordered locus">lpg1430</name>
</gene>
<evidence type="ECO:0000255" key="1">
    <source>
        <dbReference type="HAMAP-Rule" id="MF_01635"/>
    </source>
</evidence>
<keyword id="KW-0997">Cell inner membrane</keyword>
<keyword id="KW-1003">Cell membrane</keyword>
<keyword id="KW-0460">Magnesium</keyword>
<keyword id="KW-0472">Membrane</keyword>
<keyword id="KW-1185">Reference proteome</keyword>
<keyword id="KW-0808">Transferase</keyword>
<keyword id="KW-0812">Transmembrane</keyword>
<keyword id="KW-1133">Transmembrane helix</keyword>
<keyword id="KW-0831">Ubiquinone biosynthesis</keyword>
<comment type="function">
    <text evidence="1">Catalyzes the prenylation of para-hydroxybenzoate (PHB) with an all-trans polyprenyl group. Mediates the second step in the final reaction sequence of ubiquinone-8 (UQ-8) biosynthesis, which is the condensation of the polyisoprenoid side chain with PHB, generating the first membrane-bound Q intermediate 3-octaprenyl-4-hydroxybenzoate.</text>
</comment>
<comment type="catalytic activity">
    <reaction evidence="1">
        <text>all-trans-octaprenyl diphosphate + 4-hydroxybenzoate = 4-hydroxy-3-(all-trans-octaprenyl)benzoate + diphosphate</text>
        <dbReference type="Rhea" id="RHEA:27782"/>
        <dbReference type="ChEBI" id="CHEBI:1617"/>
        <dbReference type="ChEBI" id="CHEBI:17879"/>
        <dbReference type="ChEBI" id="CHEBI:33019"/>
        <dbReference type="ChEBI" id="CHEBI:57711"/>
        <dbReference type="EC" id="2.5.1.39"/>
    </reaction>
</comment>
<comment type="cofactor">
    <cofactor evidence="1">
        <name>Mg(2+)</name>
        <dbReference type="ChEBI" id="CHEBI:18420"/>
    </cofactor>
</comment>
<comment type="pathway">
    <text evidence="1">Cofactor biosynthesis; ubiquinone biosynthesis.</text>
</comment>
<comment type="subcellular location">
    <subcellularLocation>
        <location evidence="1">Cell inner membrane</location>
        <topology evidence="1">Multi-pass membrane protein</topology>
    </subcellularLocation>
</comment>
<comment type="similarity">
    <text evidence="1">Belongs to the UbiA prenyltransferase family.</text>
</comment>
<name>UBIA_LEGPH</name>